<name>TUSB_SALPB</name>
<protein>
    <recommendedName>
        <fullName evidence="1">Protein TusB</fullName>
    </recommendedName>
    <alternativeName>
        <fullName evidence="1">tRNA 2-thiouridine synthesizing protein B</fullName>
    </alternativeName>
</protein>
<reference key="1">
    <citation type="submission" date="2007-11" db="EMBL/GenBank/DDBJ databases">
        <authorList>
            <consortium name="The Salmonella enterica serovar Paratyphi B Genome Sequencing Project"/>
            <person name="McClelland M."/>
            <person name="Sanderson E.K."/>
            <person name="Porwollik S."/>
            <person name="Spieth J."/>
            <person name="Clifton W.S."/>
            <person name="Fulton R."/>
            <person name="Cordes M."/>
            <person name="Wollam A."/>
            <person name="Shah N."/>
            <person name="Pepin K."/>
            <person name="Bhonagiri V."/>
            <person name="Nash W."/>
            <person name="Johnson M."/>
            <person name="Thiruvilangam P."/>
            <person name="Wilson R."/>
        </authorList>
    </citation>
    <scope>NUCLEOTIDE SEQUENCE [LARGE SCALE GENOMIC DNA]</scope>
    <source>
        <strain>ATCC BAA-1250 / SPB7</strain>
    </source>
</reference>
<sequence>MLHTLPHCASGVDFPALLRLLKEGDALLLLQDGVTVAIEGNRFLESLRDAPITVYALKEDIDARGLGGQISDSVVRVDYTEFVRLTVKYANQMAW</sequence>
<accession>A9MT08</accession>
<gene>
    <name evidence="1" type="primary">tusB</name>
    <name type="ordered locus">SPAB_04291</name>
</gene>
<dbReference type="EMBL" id="CP000886">
    <property type="protein sequence ID" value="ABX69608.1"/>
    <property type="molecule type" value="Genomic_DNA"/>
</dbReference>
<dbReference type="RefSeq" id="WP_000903398.1">
    <property type="nucleotide sequence ID" value="NC_010102.1"/>
</dbReference>
<dbReference type="SMR" id="A9MT08"/>
<dbReference type="KEGG" id="spq:SPAB_04291"/>
<dbReference type="PATRIC" id="fig|1016998.12.peg.4038"/>
<dbReference type="HOGENOM" id="CLU_166087_2_1_6"/>
<dbReference type="BioCyc" id="SENT1016998:SPAB_RS17480-MONOMER"/>
<dbReference type="Proteomes" id="UP000008556">
    <property type="component" value="Chromosome"/>
</dbReference>
<dbReference type="GO" id="GO:1990228">
    <property type="term" value="C:sulfurtransferase complex"/>
    <property type="evidence" value="ECO:0007669"/>
    <property type="project" value="TreeGrafter"/>
</dbReference>
<dbReference type="GO" id="GO:0002143">
    <property type="term" value="P:tRNA wobble position uridine thiolation"/>
    <property type="evidence" value="ECO:0007669"/>
    <property type="project" value="InterPro"/>
</dbReference>
<dbReference type="FunFam" id="3.40.1260.10:FF:000002">
    <property type="entry name" value="Sulfurtransferase TusB"/>
    <property type="match status" value="1"/>
</dbReference>
<dbReference type="Gene3D" id="3.40.1260.10">
    <property type="entry name" value="DsrEFH-like"/>
    <property type="match status" value="1"/>
</dbReference>
<dbReference type="HAMAP" id="MF_01564">
    <property type="entry name" value="Thiourid_synth_B"/>
    <property type="match status" value="1"/>
</dbReference>
<dbReference type="InterPro" id="IPR027396">
    <property type="entry name" value="DsrEFH-like"/>
</dbReference>
<dbReference type="InterPro" id="IPR023526">
    <property type="entry name" value="Sulphur_relay_TusB"/>
</dbReference>
<dbReference type="InterPro" id="IPR007215">
    <property type="entry name" value="Sulphur_relay_TusB/DsrH"/>
</dbReference>
<dbReference type="NCBIfam" id="NF010035">
    <property type="entry name" value="PRK13510.1"/>
    <property type="match status" value="1"/>
</dbReference>
<dbReference type="NCBIfam" id="TIGR03011">
    <property type="entry name" value="sulf_tusB_dsrH"/>
    <property type="match status" value="1"/>
</dbReference>
<dbReference type="PANTHER" id="PTHR37526">
    <property type="entry name" value="PROTEIN TUSB"/>
    <property type="match status" value="1"/>
</dbReference>
<dbReference type="PANTHER" id="PTHR37526:SF1">
    <property type="entry name" value="PROTEIN TUSB"/>
    <property type="match status" value="1"/>
</dbReference>
<dbReference type="Pfam" id="PF04077">
    <property type="entry name" value="DsrH"/>
    <property type="match status" value="1"/>
</dbReference>
<dbReference type="SUPFAM" id="SSF75169">
    <property type="entry name" value="DsrEFH-like"/>
    <property type="match status" value="1"/>
</dbReference>
<comment type="function">
    <text evidence="1">Part of a sulfur-relay system required for 2-thiolation of 5-methylaminomethyl-2-thiouridine (mnm(5)s(2)U) at tRNA wobble positions.</text>
</comment>
<comment type="subunit">
    <text evidence="1">Heterohexamer, formed by a dimer of trimers. The hexameric TusBCD complex contains 2 copies each of TusB, TusC and TusD. The TusBCD complex interacts with TusE.</text>
</comment>
<comment type="subcellular location">
    <subcellularLocation>
        <location evidence="1">Cytoplasm</location>
    </subcellularLocation>
</comment>
<comment type="similarity">
    <text evidence="1">Belongs to the DsrH/TusB family.</text>
</comment>
<evidence type="ECO:0000255" key="1">
    <source>
        <dbReference type="HAMAP-Rule" id="MF_01564"/>
    </source>
</evidence>
<feature type="chain" id="PRO_1000087820" description="Protein TusB">
    <location>
        <begin position="1"/>
        <end position="95"/>
    </location>
</feature>
<organism>
    <name type="scientific">Salmonella paratyphi B (strain ATCC BAA-1250 / SPB7)</name>
    <dbReference type="NCBI Taxonomy" id="1016998"/>
    <lineage>
        <taxon>Bacteria</taxon>
        <taxon>Pseudomonadati</taxon>
        <taxon>Pseudomonadota</taxon>
        <taxon>Gammaproteobacteria</taxon>
        <taxon>Enterobacterales</taxon>
        <taxon>Enterobacteriaceae</taxon>
        <taxon>Salmonella</taxon>
    </lineage>
</organism>
<proteinExistence type="inferred from homology"/>
<keyword id="KW-0963">Cytoplasm</keyword>
<keyword id="KW-0819">tRNA processing</keyword>